<name>GET3_ZYGRC</name>
<evidence type="ECO:0000255" key="1">
    <source>
        <dbReference type="HAMAP-Rule" id="MF_03112"/>
    </source>
</evidence>
<reference key="1">
    <citation type="journal article" date="2009" name="Genome Res.">
        <title>Comparative genomics of protoploid Saccharomycetaceae.</title>
        <authorList>
            <consortium name="The Genolevures Consortium"/>
            <person name="Souciet J.-L."/>
            <person name="Dujon B."/>
            <person name="Gaillardin C."/>
            <person name="Johnston M."/>
            <person name="Baret P.V."/>
            <person name="Cliften P."/>
            <person name="Sherman D.J."/>
            <person name="Weissenbach J."/>
            <person name="Westhof E."/>
            <person name="Wincker P."/>
            <person name="Jubin C."/>
            <person name="Poulain J."/>
            <person name="Barbe V."/>
            <person name="Segurens B."/>
            <person name="Artiguenave F."/>
            <person name="Anthouard V."/>
            <person name="Vacherie B."/>
            <person name="Val M.-E."/>
            <person name="Fulton R.S."/>
            <person name="Minx P."/>
            <person name="Wilson R."/>
            <person name="Durrens P."/>
            <person name="Jean G."/>
            <person name="Marck C."/>
            <person name="Martin T."/>
            <person name="Nikolski M."/>
            <person name="Rolland T."/>
            <person name="Seret M.-L."/>
            <person name="Casaregola S."/>
            <person name="Despons L."/>
            <person name="Fairhead C."/>
            <person name="Fischer G."/>
            <person name="Lafontaine I."/>
            <person name="Leh V."/>
            <person name="Lemaire M."/>
            <person name="de Montigny J."/>
            <person name="Neuveglise C."/>
            <person name="Thierry A."/>
            <person name="Blanc-Lenfle I."/>
            <person name="Bleykasten C."/>
            <person name="Diffels J."/>
            <person name="Fritsch E."/>
            <person name="Frangeul L."/>
            <person name="Goeffon A."/>
            <person name="Jauniaux N."/>
            <person name="Kachouri-Lafond R."/>
            <person name="Payen C."/>
            <person name="Potier S."/>
            <person name="Pribylova L."/>
            <person name="Ozanne C."/>
            <person name="Richard G.-F."/>
            <person name="Sacerdot C."/>
            <person name="Straub M.-L."/>
            <person name="Talla E."/>
        </authorList>
    </citation>
    <scope>NUCLEOTIDE SEQUENCE [LARGE SCALE GENOMIC DNA]</scope>
    <source>
        <strain>ATCC 2623 / CBS 732 / BCRC 21506 / NBRC 1130 / NCYC 568 / NRRL Y-229</strain>
    </source>
</reference>
<keyword id="KW-0067">ATP-binding</keyword>
<keyword id="KW-0963">Cytoplasm</keyword>
<keyword id="KW-0256">Endoplasmic reticulum</keyword>
<keyword id="KW-0333">Golgi apparatus</keyword>
<keyword id="KW-0378">Hydrolase</keyword>
<keyword id="KW-0479">Metal-binding</keyword>
<keyword id="KW-0547">Nucleotide-binding</keyword>
<keyword id="KW-1185">Reference proteome</keyword>
<keyword id="KW-0813">Transport</keyword>
<keyword id="KW-0862">Zinc</keyword>
<dbReference type="EC" id="3.6.-.-" evidence="1"/>
<dbReference type="EMBL" id="CU928173">
    <property type="protein sequence ID" value="CAR25766.1"/>
    <property type="molecule type" value="Genomic_DNA"/>
</dbReference>
<dbReference type="RefSeq" id="XP_002494699.1">
    <property type="nucleotide sequence ID" value="XM_002494654.1"/>
</dbReference>
<dbReference type="SMR" id="C5DQ05"/>
<dbReference type="FunCoup" id="C5DQ05">
    <property type="interactions" value="1032"/>
</dbReference>
<dbReference type="STRING" id="559307.C5DQ05"/>
<dbReference type="GeneID" id="8201511"/>
<dbReference type="KEGG" id="zro:ZYRO0A07634g"/>
<dbReference type="HOGENOM" id="CLU_040761_0_0_1"/>
<dbReference type="InParanoid" id="C5DQ05"/>
<dbReference type="Proteomes" id="UP000008536">
    <property type="component" value="Chromosome A"/>
</dbReference>
<dbReference type="GO" id="GO:0043529">
    <property type="term" value="C:GET complex"/>
    <property type="evidence" value="ECO:0007669"/>
    <property type="project" value="TreeGrafter"/>
</dbReference>
<dbReference type="GO" id="GO:0005794">
    <property type="term" value="C:Golgi apparatus"/>
    <property type="evidence" value="ECO:0007669"/>
    <property type="project" value="UniProtKB-SubCell"/>
</dbReference>
<dbReference type="GO" id="GO:0005524">
    <property type="term" value="F:ATP binding"/>
    <property type="evidence" value="ECO:0007669"/>
    <property type="project" value="UniProtKB-UniRule"/>
</dbReference>
<dbReference type="GO" id="GO:0016887">
    <property type="term" value="F:ATP hydrolysis activity"/>
    <property type="evidence" value="ECO:0007669"/>
    <property type="project" value="InterPro"/>
</dbReference>
<dbReference type="GO" id="GO:0046872">
    <property type="term" value="F:metal ion binding"/>
    <property type="evidence" value="ECO:0007669"/>
    <property type="project" value="UniProtKB-KW"/>
</dbReference>
<dbReference type="GO" id="GO:0071816">
    <property type="term" value="P:tail-anchored membrane protein insertion into ER membrane"/>
    <property type="evidence" value="ECO:0007669"/>
    <property type="project" value="TreeGrafter"/>
</dbReference>
<dbReference type="CDD" id="cd02035">
    <property type="entry name" value="ArsA"/>
    <property type="match status" value="1"/>
</dbReference>
<dbReference type="FunFam" id="3.40.50.300:FF:001359">
    <property type="entry name" value="ATPase GET3"/>
    <property type="match status" value="1"/>
</dbReference>
<dbReference type="Gene3D" id="3.40.50.300">
    <property type="entry name" value="P-loop containing nucleotide triphosphate hydrolases"/>
    <property type="match status" value="1"/>
</dbReference>
<dbReference type="HAMAP" id="MF_03112">
    <property type="entry name" value="Asna1_Get3"/>
    <property type="match status" value="1"/>
</dbReference>
<dbReference type="InterPro" id="IPR025723">
    <property type="entry name" value="Anion-transp_ATPase-like_dom"/>
</dbReference>
<dbReference type="InterPro" id="IPR016300">
    <property type="entry name" value="ATPase_ArsA/GET3"/>
</dbReference>
<dbReference type="InterPro" id="IPR027542">
    <property type="entry name" value="ATPase_ArsA/GET3_euk"/>
</dbReference>
<dbReference type="InterPro" id="IPR027417">
    <property type="entry name" value="P-loop_NTPase"/>
</dbReference>
<dbReference type="NCBIfam" id="TIGR00345">
    <property type="entry name" value="GET3_arsA_TRC40"/>
    <property type="match status" value="1"/>
</dbReference>
<dbReference type="PANTHER" id="PTHR10803">
    <property type="entry name" value="ARSENICAL PUMP-DRIVING ATPASE ARSENITE-TRANSLOCATING ATPASE"/>
    <property type="match status" value="1"/>
</dbReference>
<dbReference type="PANTHER" id="PTHR10803:SF3">
    <property type="entry name" value="ATPASE GET3"/>
    <property type="match status" value="1"/>
</dbReference>
<dbReference type="Pfam" id="PF02374">
    <property type="entry name" value="ArsA_ATPase"/>
    <property type="match status" value="1"/>
</dbReference>
<dbReference type="SUPFAM" id="SSF52540">
    <property type="entry name" value="P-loop containing nucleoside triphosphate hydrolases"/>
    <property type="match status" value="1"/>
</dbReference>
<feature type="chain" id="PRO_0000388238" description="ATPase GET3">
    <location>
        <begin position="1"/>
        <end position="353"/>
    </location>
</feature>
<feature type="active site" evidence="1">
    <location>
        <position position="57"/>
    </location>
</feature>
<feature type="binding site" evidence="1">
    <location>
        <begin position="26"/>
        <end position="33"/>
    </location>
    <ligand>
        <name>ATP</name>
        <dbReference type="ChEBI" id="CHEBI:30616"/>
    </ligand>
</feature>
<feature type="binding site" evidence="1">
    <location>
        <position position="244"/>
    </location>
    <ligand>
        <name>ATP</name>
        <dbReference type="ChEBI" id="CHEBI:30616"/>
    </ligand>
</feature>
<feature type="binding site" evidence="1">
    <location>
        <position position="271"/>
    </location>
    <ligand>
        <name>ATP</name>
        <dbReference type="ChEBI" id="CHEBI:30616"/>
    </ligand>
</feature>
<feature type="binding site" evidence="1">
    <location>
        <position position="284"/>
    </location>
    <ligand>
        <name>Zn(2+)</name>
        <dbReference type="ChEBI" id="CHEBI:29105"/>
        <note>ligand shared between dimeric partners</note>
    </ligand>
</feature>
<feature type="binding site" evidence="1">
    <location>
        <position position="287"/>
    </location>
    <ligand>
        <name>Zn(2+)</name>
        <dbReference type="ChEBI" id="CHEBI:29105"/>
        <note>ligand shared between dimeric partners</note>
    </ligand>
</feature>
<sequence length="353" mass="39337">MDLVVEPNLHSLINSSTHKWIFVGGKGGVGKTTSSCSIAIQMAQSQPHKQFLLISTDPAHNLSDAFGEKFGKDARRVTGMNNLSCMEIDPSAALKDMNDMAVSQANENGAQGDDGLGGLLQGGALAELTGSIPGIDEALSFMEVMKHIKNQEKGEGERYDTVIFDTAPTGHTLRFLQLPNTLSKLLEKFGEITGRLGPMLNSLAGAGNVDISTKLNQLKESVETIKDQFTNPDLTTFVCVCISEFLSLYETERLIQELISYDMDVNSIIVNQLLFADDDQEHNCKRCQARWKMQKKYLDQIDELYEDFHVVKMPLCAGEIRGLENLRKFSRFLNKEYNPAMDNKIIYELENKK</sequence>
<comment type="function">
    <text evidence="1">ATPase required for the post-translational delivery of tail-anchored (TA) proteins to the endoplasmic reticulum. Recognizes and selectively binds the transmembrane domain of TA proteins in the cytosol. This complex then targets to the endoplasmic reticulum by membrane-bound receptors GET1 and GET2, where the tail-anchored protein is released for insertion. This process is regulated by ATP binding and hydrolysis. ATP binding drives the homodimer towards the closed dimer state, facilitating recognition of newly synthesized TA membrane proteins. ATP hydrolysis is required for insertion. Subsequently, the homodimer reverts towards the open dimer state, lowering its affinity for the GET1-GET2 receptor, and returning it to the cytosol to initiate a new round of targeting. Cooperates with the HDEL receptor ERD2 to mediate the ATP-dependent retrieval of resident ER proteins that contain a C-terminal H-D-E-L retention signal from the Golgi to the ER. Involved in low-level resistance to the oxyanions arsenite and arsenate, and in heat tolerance.</text>
</comment>
<comment type="subunit">
    <text evidence="1">Homodimer. Component of the Golgi to ER traffic (GET) complex, which is composed of GET1, GET2 and GET3. Within the complex, GET1 and GET2 form a heterotetramer which is stabilized by phosphatidylinositol binding and which binds to the GET3 homodimer. Interacts with the chloride channel protein GEF1.</text>
</comment>
<comment type="subcellular location">
    <subcellularLocation>
        <location evidence="1">Cytoplasm</location>
    </subcellularLocation>
    <subcellularLocation>
        <location evidence="1">Endoplasmic reticulum</location>
    </subcellularLocation>
    <subcellularLocation>
        <location evidence="1">Golgi apparatus</location>
    </subcellularLocation>
    <text evidence="1">GET1 and GET2 are required for targeting GET3 to the endoplasmic reticulum.</text>
</comment>
<comment type="similarity">
    <text evidence="1">Belongs to the arsA ATPase family.</text>
</comment>
<protein>
    <recommendedName>
        <fullName evidence="1">ATPase GET3</fullName>
        <ecNumber evidence="1">3.6.-.-</ecNumber>
    </recommendedName>
    <alternativeName>
        <fullName evidence="1">Arsenical pump-driving ATPase</fullName>
    </alternativeName>
    <alternativeName>
        <fullName evidence="1">Arsenite-stimulated ATPase</fullName>
    </alternativeName>
    <alternativeName>
        <fullName evidence="1">Golgi to ER traffic protein 3</fullName>
    </alternativeName>
    <alternativeName>
        <fullName evidence="1">Guided entry of tail-anchored proteins 3</fullName>
    </alternativeName>
</protein>
<organism>
    <name type="scientific">Zygosaccharomyces rouxii (strain ATCC 2623 / CBS 732 / NBRC 1130 / NCYC 568 / NRRL Y-229)</name>
    <dbReference type="NCBI Taxonomy" id="559307"/>
    <lineage>
        <taxon>Eukaryota</taxon>
        <taxon>Fungi</taxon>
        <taxon>Dikarya</taxon>
        <taxon>Ascomycota</taxon>
        <taxon>Saccharomycotina</taxon>
        <taxon>Saccharomycetes</taxon>
        <taxon>Saccharomycetales</taxon>
        <taxon>Saccharomycetaceae</taxon>
        <taxon>Zygosaccharomyces</taxon>
    </lineage>
</organism>
<proteinExistence type="inferred from homology"/>
<accession>C5DQ05</accession>
<gene>
    <name evidence="1" type="primary">GET3</name>
    <name type="ordered locus">ZYRO0A07634g</name>
</gene>